<gene>
    <name evidence="1" type="primary">rpsS</name>
    <name type="ordered locus">Anae109_1915</name>
</gene>
<keyword id="KW-1185">Reference proteome</keyword>
<keyword id="KW-0687">Ribonucleoprotein</keyword>
<keyword id="KW-0689">Ribosomal protein</keyword>
<keyword id="KW-0694">RNA-binding</keyword>
<keyword id="KW-0699">rRNA-binding</keyword>
<sequence length="96" mass="10651">MARSIKKGPFADKHLTKKVEDANKGNKKSVIKTWSRRSTILPDFVGHTFAVHNGRKFVPVFVTENMVGHKLGEFAPTRTFHGHSAEKKAAAAPARK</sequence>
<evidence type="ECO:0000255" key="1">
    <source>
        <dbReference type="HAMAP-Rule" id="MF_00531"/>
    </source>
</evidence>
<evidence type="ECO:0000256" key="2">
    <source>
        <dbReference type="SAM" id="MobiDB-lite"/>
    </source>
</evidence>
<evidence type="ECO:0000305" key="3"/>
<name>RS19_ANADF</name>
<organism>
    <name type="scientific">Anaeromyxobacter sp. (strain Fw109-5)</name>
    <dbReference type="NCBI Taxonomy" id="404589"/>
    <lineage>
        <taxon>Bacteria</taxon>
        <taxon>Pseudomonadati</taxon>
        <taxon>Myxococcota</taxon>
        <taxon>Myxococcia</taxon>
        <taxon>Myxococcales</taxon>
        <taxon>Cystobacterineae</taxon>
        <taxon>Anaeromyxobacteraceae</taxon>
        <taxon>Anaeromyxobacter</taxon>
    </lineage>
</organism>
<proteinExistence type="inferred from homology"/>
<protein>
    <recommendedName>
        <fullName evidence="1">Small ribosomal subunit protein uS19</fullName>
    </recommendedName>
    <alternativeName>
        <fullName evidence="3">30S ribosomal protein S19</fullName>
    </alternativeName>
</protein>
<accession>A7HBM2</accession>
<comment type="function">
    <text evidence="1">Protein S19 forms a complex with S13 that binds strongly to the 16S ribosomal RNA.</text>
</comment>
<comment type="similarity">
    <text evidence="1">Belongs to the universal ribosomal protein uS19 family.</text>
</comment>
<feature type="chain" id="PRO_1000051008" description="Small ribosomal subunit protein uS19">
    <location>
        <begin position="1"/>
        <end position="96"/>
    </location>
</feature>
<feature type="region of interest" description="Disordered" evidence="2">
    <location>
        <begin position="1"/>
        <end position="30"/>
    </location>
</feature>
<feature type="compositionally biased region" description="Basic and acidic residues" evidence="2">
    <location>
        <begin position="9"/>
        <end position="24"/>
    </location>
</feature>
<dbReference type="EMBL" id="CP000769">
    <property type="protein sequence ID" value="ABS26118.1"/>
    <property type="molecule type" value="Genomic_DNA"/>
</dbReference>
<dbReference type="RefSeq" id="WP_012096696.1">
    <property type="nucleotide sequence ID" value="NC_009675.1"/>
</dbReference>
<dbReference type="SMR" id="A7HBM2"/>
<dbReference type="STRING" id="404589.Anae109_1915"/>
<dbReference type="KEGG" id="afw:Anae109_1915"/>
<dbReference type="eggNOG" id="COG0185">
    <property type="taxonomic scope" value="Bacteria"/>
</dbReference>
<dbReference type="HOGENOM" id="CLU_144911_0_1_7"/>
<dbReference type="OrthoDB" id="9797833at2"/>
<dbReference type="Proteomes" id="UP000006382">
    <property type="component" value="Chromosome"/>
</dbReference>
<dbReference type="GO" id="GO:0005737">
    <property type="term" value="C:cytoplasm"/>
    <property type="evidence" value="ECO:0007669"/>
    <property type="project" value="UniProtKB-ARBA"/>
</dbReference>
<dbReference type="GO" id="GO:0015935">
    <property type="term" value="C:small ribosomal subunit"/>
    <property type="evidence" value="ECO:0007669"/>
    <property type="project" value="InterPro"/>
</dbReference>
<dbReference type="GO" id="GO:0019843">
    <property type="term" value="F:rRNA binding"/>
    <property type="evidence" value="ECO:0007669"/>
    <property type="project" value="UniProtKB-UniRule"/>
</dbReference>
<dbReference type="GO" id="GO:0003735">
    <property type="term" value="F:structural constituent of ribosome"/>
    <property type="evidence" value="ECO:0007669"/>
    <property type="project" value="InterPro"/>
</dbReference>
<dbReference type="GO" id="GO:0000028">
    <property type="term" value="P:ribosomal small subunit assembly"/>
    <property type="evidence" value="ECO:0007669"/>
    <property type="project" value="TreeGrafter"/>
</dbReference>
<dbReference type="GO" id="GO:0006412">
    <property type="term" value="P:translation"/>
    <property type="evidence" value="ECO:0007669"/>
    <property type="project" value="UniProtKB-UniRule"/>
</dbReference>
<dbReference type="FunFam" id="3.30.860.10:FF:000001">
    <property type="entry name" value="30S ribosomal protein S19"/>
    <property type="match status" value="1"/>
</dbReference>
<dbReference type="Gene3D" id="3.30.860.10">
    <property type="entry name" value="30s Ribosomal Protein S19, Chain A"/>
    <property type="match status" value="1"/>
</dbReference>
<dbReference type="HAMAP" id="MF_00531">
    <property type="entry name" value="Ribosomal_uS19"/>
    <property type="match status" value="1"/>
</dbReference>
<dbReference type="InterPro" id="IPR002222">
    <property type="entry name" value="Ribosomal_uS19"/>
</dbReference>
<dbReference type="InterPro" id="IPR005732">
    <property type="entry name" value="Ribosomal_uS19_bac-type"/>
</dbReference>
<dbReference type="InterPro" id="IPR020934">
    <property type="entry name" value="Ribosomal_uS19_CS"/>
</dbReference>
<dbReference type="InterPro" id="IPR023575">
    <property type="entry name" value="Ribosomal_uS19_SF"/>
</dbReference>
<dbReference type="NCBIfam" id="TIGR01050">
    <property type="entry name" value="rpsS_bact"/>
    <property type="match status" value="1"/>
</dbReference>
<dbReference type="PANTHER" id="PTHR11880">
    <property type="entry name" value="RIBOSOMAL PROTEIN S19P FAMILY MEMBER"/>
    <property type="match status" value="1"/>
</dbReference>
<dbReference type="PANTHER" id="PTHR11880:SF8">
    <property type="entry name" value="SMALL RIBOSOMAL SUBUNIT PROTEIN US19M"/>
    <property type="match status" value="1"/>
</dbReference>
<dbReference type="Pfam" id="PF00203">
    <property type="entry name" value="Ribosomal_S19"/>
    <property type="match status" value="1"/>
</dbReference>
<dbReference type="PIRSF" id="PIRSF002144">
    <property type="entry name" value="Ribosomal_S19"/>
    <property type="match status" value="1"/>
</dbReference>
<dbReference type="PRINTS" id="PR00975">
    <property type="entry name" value="RIBOSOMALS19"/>
</dbReference>
<dbReference type="SUPFAM" id="SSF54570">
    <property type="entry name" value="Ribosomal protein S19"/>
    <property type="match status" value="1"/>
</dbReference>
<dbReference type="PROSITE" id="PS00323">
    <property type="entry name" value="RIBOSOMAL_S19"/>
    <property type="match status" value="1"/>
</dbReference>
<reference key="1">
    <citation type="journal article" date="2015" name="Genome Announc.">
        <title>Complete genome sequence of Anaeromyxobacter sp. Fw109-5, an anaerobic, metal-reducing bacterium isolated from a contaminated subsurface environment.</title>
        <authorList>
            <person name="Hwang C."/>
            <person name="Copeland A."/>
            <person name="Lucas S."/>
            <person name="Lapidus A."/>
            <person name="Barry K."/>
            <person name="Glavina Del Rio T."/>
            <person name="Dalin E."/>
            <person name="Tice H."/>
            <person name="Pitluck S."/>
            <person name="Sims D."/>
            <person name="Brettin T."/>
            <person name="Bruce D.C."/>
            <person name="Detter J.C."/>
            <person name="Han C.S."/>
            <person name="Schmutz J."/>
            <person name="Larimer F.W."/>
            <person name="Land M.L."/>
            <person name="Hauser L.J."/>
            <person name="Kyrpides N."/>
            <person name="Lykidis A."/>
            <person name="Richardson P."/>
            <person name="Belieav A."/>
            <person name="Sanford R.A."/>
            <person name="Loeffler F.E."/>
            <person name="Fields M.W."/>
        </authorList>
    </citation>
    <scope>NUCLEOTIDE SEQUENCE [LARGE SCALE GENOMIC DNA]</scope>
    <source>
        <strain>Fw109-5</strain>
    </source>
</reference>